<name>NUON_PARP8</name>
<protein>
    <recommendedName>
        <fullName evidence="1">NADH-quinone oxidoreductase subunit N</fullName>
        <ecNumber evidence="1">7.1.1.-</ecNumber>
    </recommendedName>
    <alternativeName>
        <fullName evidence="1">NADH dehydrogenase I subunit N</fullName>
    </alternativeName>
    <alternativeName>
        <fullName evidence="1">NDH-1 subunit N</fullName>
    </alternativeName>
</protein>
<feature type="chain" id="PRO_0000391117" description="NADH-quinone oxidoreductase subunit N">
    <location>
        <begin position="1"/>
        <end position="492"/>
    </location>
</feature>
<feature type="transmembrane region" description="Helical" evidence="1">
    <location>
        <begin position="5"/>
        <end position="25"/>
    </location>
</feature>
<feature type="transmembrane region" description="Helical" evidence="1">
    <location>
        <begin position="37"/>
        <end position="57"/>
    </location>
</feature>
<feature type="transmembrane region" description="Helical" evidence="1">
    <location>
        <begin position="72"/>
        <end position="92"/>
    </location>
</feature>
<feature type="transmembrane region" description="Helical" evidence="1">
    <location>
        <begin position="104"/>
        <end position="124"/>
    </location>
</feature>
<feature type="transmembrane region" description="Helical" evidence="1">
    <location>
        <begin position="129"/>
        <end position="149"/>
    </location>
</feature>
<feature type="transmembrane region" description="Helical" evidence="1">
    <location>
        <begin position="164"/>
        <end position="184"/>
    </location>
</feature>
<feature type="transmembrane region" description="Helical" evidence="1">
    <location>
        <begin position="205"/>
        <end position="225"/>
    </location>
</feature>
<feature type="transmembrane region" description="Helical" evidence="1">
    <location>
        <begin position="239"/>
        <end position="259"/>
    </location>
</feature>
<feature type="transmembrane region" description="Helical" evidence="1">
    <location>
        <begin position="276"/>
        <end position="295"/>
    </location>
</feature>
<feature type="transmembrane region" description="Helical" evidence="1">
    <location>
        <begin position="302"/>
        <end position="322"/>
    </location>
</feature>
<feature type="transmembrane region" description="Helical" evidence="1">
    <location>
        <begin position="337"/>
        <end position="357"/>
    </location>
</feature>
<feature type="transmembrane region" description="Helical" evidence="1">
    <location>
        <begin position="380"/>
        <end position="400"/>
    </location>
</feature>
<feature type="transmembrane region" description="Helical" evidence="1">
    <location>
        <begin position="414"/>
        <end position="434"/>
    </location>
</feature>
<feature type="transmembrane region" description="Helical" evidence="1">
    <location>
        <begin position="466"/>
        <end position="486"/>
    </location>
</feature>
<comment type="function">
    <text evidence="1">NDH-1 shuttles electrons from NADH, via FMN and iron-sulfur (Fe-S) centers, to quinones in the respiratory chain. The immediate electron acceptor for the enzyme in this species is believed to be ubiquinone. Couples the redox reaction to proton translocation (for every two electrons transferred, four hydrogen ions are translocated across the cytoplasmic membrane), and thus conserves the redox energy in a proton gradient.</text>
</comment>
<comment type="catalytic activity">
    <reaction evidence="1">
        <text>a quinone + NADH + 5 H(+)(in) = a quinol + NAD(+) + 4 H(+)(out)</text>
        <dbReference type="Rhea" id="RHEA:57888"/>
        <dbReference type="ChEBI" id="CHEBI:15378"/>
        <dbReference type="ChEBI" id="CHEBI:24646"/>
        <dbReference type="ChEBI" id="CHEBI:57540"/>
        <dbReference type="ChEBI" id="CHEBI:57945"/>
        <dbReference type="ChEBI" id="CHEBI:132124"/>
    </reaction>
</comment>
<comment type="subunit">
    <text evidence="1">NDH-1 is composed of 14 different subunits. Subunits NuoA, H, J, K, L, M, N constitute the membrane sector of the complex.</text>
</comment>
<comment type="subcellular location">
    <subcellularLocation>
        <location evidence="1">Cell inner membrane</location>
        <topology evidence="1">Multi-pass membrane protein</topology>
    </subcellularLocation>
</comment>
<comment type="similarity">
    <text evidence="1">Belongs to the complex I subunit 2 family.</text>
</comment>
<gene>
    <name evidence="1" type="primary">nuoN</name>
    <name type="ordered locus">Bphy_1996</name>
</gene>
<accession>B2JDL5</accession>
<evidence type="ECO:0000255" key="1">
    <source>
        <dbReference type="HAMAP-Rule" id="MF_00445"/>
    </source>
</evidence>
<dbReference type="EC" id="7.1.1.-" evidence="1"/>
<dbReference type="EMBL" id="CP001043">
    <property type="protein sequence ID" value="ACC71175.1"/>
    <property type="molecule type" value="Genomic_DNA"/>
</dbReference>
<dbReference type="RefSeq" id="WP_012401385.1">
    <property type="nucleotide sequence ID" value="NC_010622.1"/>
</dbReference>
<dbReference type="SMR" id="B2JDL5"/>
<dbReference type="STRING" id="391038.Bphy_1996"/>
<dbReference type="KEGG" id="bph:Bphy_1996"/>
<dbReference type="eggNOG" id="COG1007">
    <property type="taxonomic scope" value="Bacteria"/>
</dbReference>
<dbReference type="HOGENOM" id="CLU_007100_1_3_4"/>
<dbReference type="OrthoDB" id="9768329at2"/>
<dbReference type="Proteomes" id="UP000001192">
    <property type="component" value="Chromosome 1"/>
</dbReference>
<dbReference type="GO" id="GO:0005886">
    <property type="term" value="C:plasma membrane"/>
    <property type="evidence" value="ECO:0007669"/>
    <property type="project" value="UniProtKB-SubCell"/>
</dbReference>
<dbReference type="GO" id="GO:0008137">
    <property type="term" value="F:NADH dehydrogenase (ubiquinone) activity"/>
    <property type="evidence" value="ECO:0007669"/>
    <property type="project" value="InterPro"/>
</dbReference>
<dbReference type="GO" id="GO:0050136">
    <property type="term" value="F:NADH:ubiquinone reductase (non-electrogenic) activity"/>
    <property type="evidence" value="ECO:0007669"/>
    <property type="project" value="UniProtKB-UniRule"/>
</dbReference>
<dbReference type="GO" id="GO:0048038">
    <property type="term" value="F:quinone binding"/>
    <property type="evidence" value="ECO:0007669"/>
    <property type="project" value="UniProtKB-KW"/>
</dbReference>
<dbReference type="GO" id="GO:0042773">
    <property type="term" value="P:ATP synthesis coupled electron transport"/>
    <property type="evidence" value="ECO:0007669"/>
    <property type="project" value="InterPro"/>
</dbReference>
<dbReference type="HAMAP" id="MF_00445">
    <property type="entry name" value="NDH1_NuoN_1"/>
    <property type="match status" value="1"/>
</dbReference>
<dbReference type="InterPro" id="IPR010096">
    <property type="entry name" value="NADH-Q_OxRdtase_suN/2"/>
</dbReference>
<dbReference type="InterPro" id="IPR001750">
    <property type="entry name" value="ND/Mrp_TM"/>
</dbReference>
<dbReference type="NCBIfam" id="TIGR01770">
    <property type="entry name" value="NDH_I_N"/>
    <property type="match status" value="1"/>
</dbReference>
<dbReference type="NCBIfam" id="NF004442">
    <property type="entry name" value="PRK05777.1-5"/>
    <property type="match status" value="1"/>
</dbReference>
<dbReference type="PANTHER" id="PTHR22773">
    <property type="entry name" value="NADH DEHYDROGENASE"/>
    <property type="match status" value="1"/>
</dbReference>
<dbReference type="Pfam" id="PF00361">
    <property type="entry name" value="Proton_antipo_M"/>
    <property type="match status" value="1"/>
</dbReference>
<dbReference type="PRINTS" id="PR01434">
    <property type="entry name" value="NADHDHGNASE5"/>
</dbReference>
<keyword id="KW-0997">Cell inner membrane</keyword>
<keyword id="KW-1003">Cell membrane</keyword>
<keyword id="KW-0472">Membrane</keyword>
<keyword id="KW-0520">NAD</keyword>
<keyword id="KW-0874">Quinone</keyword>
<keyword id="KW-1185">Reference proteome</keyword>
<keyword id="KW-1278">Translocase</keyword>
<keyword id="KW-0812">Transmembrane</keyword>
<keyword id="KW-1133">Transmembrane helix</keyword>
<keyword id="KW-0813">Transport</keyword>
<keyword id="KW-0830">Ubiquinone</keyword>
<reference key="1">
    <citation type="journal article" date="2014" name="Stand. Genomic Sci.">
        <title>Complete genome sequence of Burkholderia phymatum STM815(T), a broad host range and efficient nitrogen-fixing symbiont of Mimosa species.</title>
        <authorList>
            <person name="Moulin L."/>
            <person name="Klonowska A."/>
            <person name="Caroline B."/>
            <person name="Booth K."/>
            <person name="Vriezen J.A."/>
            <person name="Melkonian R."/>
            <person name="James E.K."/>
            <person name="Young J.P."/>
            <person name="Bena G."/>
            <person name="Hauser L."/>
            <person name="Land M."/>
            <person name="Kyrpides N."/>
            <person name="Bruce D."/>
            <person name="Chain P."/>
            <person name="Copeland A."/>
            <person name="Pitluck S."/>
            <person name="Woyke T."/>
            <person name="Lizotte-Waniewski M."/>
            <person name="Bristow J."/>
            <person name="Riley M."/>
        </authorList>
    </citation>
    <scope>NUCLEOTIDE SEQUENCE [LARGE SCALE GENOMIC DNA]</scope>
    <source>
        <strain>DSM 17167 / CIP 108236 / LMG 21445 / STM815</strain>
    </source>
</reference>
<proteinExistence type="inferred from homology"/>
<organism>
    <name type="scientific">Paraburkholderia phymatum (strain DSM 17167 / CIP 108236 / LMG 21445 / STM815)</name>
    <name type="common">Burkholderia phymatum</name>
    <dbReference type="NCBI Taxonomy" id="391038"/>
    <lineage>
        <taxon>Bacteria</taxon>
        <taxon>Pseudomonadati</taxon>
        <taxon>Pseudomonadota</taxon>
        <taxon>Betaproteobacteria</taxon>
        <taxon>Burkholderiales</taxon>
        <taxon>Burkholderiaceae</taxon>
        <taxon>Paraburkholderia</taxon>
    </lineage>
</organism>
<sequence length="492" mass="52801">MQNAPMTALLPDALVMAAIVVAWLIDTFVGPNSRRTTYFIALLSTVVAGIWFAIDALTPGAGPQYFFSRMYVVDPFASVMKAVVSLGYAVSIVYSRKYLEDRGLYEGNFFLLGMFSLLGQLVMISGNNFLTLYLGLELMSLSLYAAIALRRENAPSTEAAMKYYVLGALASGFLLYGISMLYGATGSLELNEVLKAVASGRINDVVLLFGVIFIVAGVAFKMGAVPFHMWVPDVYQGAPTAMTLIVGGGPKVAAFAWGLRFLVMGLLPLAVDWQEMLVILAALSLIVGNITGIVQRNVKRMLAYSAISNMGFVLLGLLAGVVDGKTGAAASAYGSAMFYSIVYLITTLGSFGVVMLLARREFEAETLDDFKGLNQRSPVFAFVMMVMMFSLAGIPPAVGFYAKLAVLEATMNAGLTWLAVLAVITSLFGAFYYLRIVKLMYFDDPVDTTPIVGDACKRTLLALNGVAVLVLGIVPGPLMSICLNAISHTLPL</sequence>